<dbReference type="EMBL" id="CP001157">
    <property type="protein sequence ID" value="ACO77502.1"/>
    <property type="molecule type" value="Genomic_DNA"/>
</dbReference>
<dbReference type="RefSeq" id="WP_012699922.1">
    <property type="nucleotide sequence ID" value="NC_012560.1"/>
</dbReference>
<dbReference type="SMR" id="C1DQ50"/>
<dbReference type="STRING" id="322710.Avin_12760"/>
<dbReference type="EnsemblBacteria" id="ACO77502">
    <property type="protein sequence ID" value="ACO77502"/>
    <property type="gene ID" value="Avin_12760"/>
</dbReference>
<dbReference type="GeneID" id="88184592"/>
<dbReference type="KEGG" id="avn:Avin_12760"/>
<dbReference type="eggNOG" id="COG1660">
    <property type="taxonomic scope" value="Bacteria"/>
</dbReference>
<dbReference type="HOGENOM" id="CLU_059558_1_1_6"/>
<dbReference type="OrthoDB" id="9784461at2"/>
<dbReference type="Proteomes" id="UP000002424">
    <property type="component" value="Chromosome"/>
</dbReference>
<dbReference type="GO" id="GO:0005524">
    <property type="term" value="F:ATP binding"/>
    <property type="evidence" value="ECO:0007669"/>
    <property type="project" value="UniProtKB-UniRule"/>
</dbReference>
<dbReference type="GO" id="GO:0005525">
    <property type="term" value="F:GTP binding"/>
    <property type="evidence" value="ECO:0007669"/>
    <property type="project" value="UniProtKB-UniRule"/>
</dbReference>
<dbReference type="Gene3D" id="3.40.50.300">
    <property type="entry name" value="P-loop containing nucleotide triphosphate hydrolases"/>
    <property type="match status" value="1"/>
</dbReference>
<dbReference type="HAMAP" id="MF_00636">
    <property type="entry name" value="RapZ_like"/>
    <property type="match status" value="1"/>
</dbReference>
<dbReference type="InterPro" id="IPR027417">
    <property type="entry name" value="P-loop_NTPase"/>
</dbReference>
<dbReference type="InterPro" id="IPR005337">
    <property type="entry name" value="RapZ-like"/>
</dbReference>
<dbReference type="InterPro" id="IPR053930">
    <property type="entry name" value="RapZ-like_N"/>
</dbReference>
<dbReference type="InterPro" id="IPR053931">
    <property type="entry name" value="RapZ_C"/>
</dbReference>
<dbReference type="NCBIfam" id="NF003828">
    <property type="entry name" value="PRK05416.1"/>
    <property type="match status" value="1"/>
</dbReference>
<dbReference type="PANTHER" id="PTHR30448">
    <property type="entry name" value="RNASE ADAPTER PROTEIN RAPZ"/>
    <property type="match status" value="1"/>
</dbReference>
<dbReference type="PANTHER" id="PTHR30448:SF0">
    <property type="entry name" value="RNASE ADAPTER PROTEIN RAPZ"/>
    <property type="match status" value="1"/>
</dbReference>
<dbReference type="Pfam" id="PF22740">
    <property type="entry name" value="PapZ_C"/>
    <property type="match status" value="1"/>
</dbReference>
<dbReference type="Pfam" id="PF03668">
    <property type="entry name" value="RapZ-like_N"/>
    <property type="match status" value="1"/>
</dbReference>
<dbReference type="PIRSF" id="PIRSF005052">
    <property type="entry name" value="P-loopkin"/>
    <property type="match status" value="1"/>
</dbReference>
<dbReference type="SUPFAM" id="SSF52540">
    <property type="entry name" value="P-loop containing nucleoside triphosphate hydrolases"/>
    <property type="match status" value="1"/>
</dbReference>
<proteinExistence type="inferred from homology"/>
<reference key="1">
    <citation type="journal article" date="2009" name="J. Bacteriol.">
        <title>Genome sequence of Azotobacter vinelandii, an obligate aerobe specialized to support diverse anaerobic metabolic processes.</title>
        <authorList>
            <person name="Setubal J.C."/>
            <person name="Dos Santos P."/>
            <person name="Goldman B.S."/>
            <person name="Ertesvaag H."/>
            <person name="Espin G."/>
            <person name="Rubio L.M."/>
            <person name="Valla S."/>
            <person name="Almeida N.F."/>
            <person name="Balasubramanian D."/>
            <person name="Cromes L."/>
            <person name="Curatti L."/>
            <person name="Du Z."/>
            <person name="Godsy E."/>
            <person name="Goodner B."/>
            <person name="Hellner-Burris K."/>
            <person name="Hernandez J.A."/>
            <person name="Houmiel K."/>
            <person name="Imperial J."/>
            <person name="Kennedy C."/>
            <person name="Larson T.J."/>
            <person name="Latreille P."/>
            <person name="Ligon L.S."/>
            <person name="Lu J."/>
            <person name="Maerk M."/>
            <person name="Miller N.M."/>
            <person name="Norton S."/>
            <person name="O'Carroll I.P."/>
            <person name="Paulsen I."/>
            <person name="Raulfs E.C."/>
            <person name="Roemer R."/>
            <person name="Rosser J."/>
            <person name="Segura D."/>
            <person name="Slater S."/>
            <person name="Stricklin S.L."/>
            <person name="Studholme D.J."/>
            <person name="Sun J."/>
            <person name="Viana C.J."/>
            <person name="Wallin E."/>
            <person name="Wang B."/>
            <person name="Wheeler C."/>
            <person name="Zhu H."/>
            <person name="Dean D.R."/>
            <person name="Dixon R."/>
            <person name="Wood D."/>
        </authorList>
    </citation>
    <scope>NUCLEOTIDE SEQUENCE [LARGE SCALE GENOMIC DNA]</scope>
    <source>
        <strain>DJ / ATCC BAA-1303</strain>
    </source>
</reference>
<gene>
    <name type="ordered locus">Avin_12760</name>
</gene>
<feature type="chain" id="PRO_0000383215" description="Nucleotide-binding protein Avin_12760">
    <location>
        <begin position="1"/>
        <end position="285"/>
    </location>
</feature>
<feature type="binding site" evidence="1">
    <location>
        <begin position="8"/>
        <end position="15"/>
    </location>
    <ligand>
        <name>ATP</name>
        <dbReference type="ChEBI" id="CHEBI:30616"/>
    </ligand>
</feature>
<feature type="binding site" evidence="1">
    <location>
        <begin position="60"/>
        <end position="63"/>
    </location>
    <ligand>
        <name>GTP</name>
        <dbReference type="ChEBI" id="CHEBI:37565"/>
    </ligand>
</feature>
<protein>
    <recommendedName>
        <fullName evidence="1">Nucleotide-binding protein Avin_12760</fullName>
    </recommendedName>
</protein>
<sequence length="285" mass="32423">MRVIIVSGRSGSGKSTALNVLEDNGFFCIDNLPAVLLPELAERALLHTELLEPQVAVSIDARNLPSQLKRFPELLAEVRTRYILCDLLYLDADDKTLLKRFSETRRRHPLTNENRSLAEAIRDEGRLLTPIKDLADLKIDTTHLNLYQLRDTLKLRLLNKPEPGTAFLIESFGFKKGMPVDADLVFDVRCLPNPYWKPDLRDFSGLDQPVADYLAVQPDVEEMYQDILTYLQKWLPRFAASNRAYVTIAIGCTGGHHRSVYLADRLGQALKQSLKNVQVRHRDLC</sequence>
<comment type="function">
    <text evidence="1">Displays ATPase and GTPase activities.</text>
</comment>
<comment type="similarity">
    <text evidence="1">Belongs to the RapZ-like family.</text>
</comment>
<keyword id="KW-0067">ATP-binding</keyword>
<keyword id="KW-0342">GTP-binding</keyword>
<keyword id="KW-0547">Nucleotide-binding</keyword>
<accession>C1DQ50</accession>
<name>Y1276_AZOVD</name>
<evidence type="ECO:0000255" key="1">
    <source>
        <dbReference type="HAMAP-Rule" id="MF_00636"/>
    </source>
</evidence>
<organism>
    <name type="scientific">Azotobacter vinelandii (strain DJ / ATCC BAA-1303)</name>
    <dbReference type="NCBI Taxonomy" id="322710"/>
    <lineage>
        <taxon>Bacteria</taxon>
        <taxon>Pseudomonadati</taxon>
        <taxon>Pseudomonadota</taxon>
        <taxon>Gammaproteobacteria</taxon>
        <taxon>Pseudomonadales</taxon>
        <taxon>Pseudomonadaceae</taxon>
        <taxon>Azotobacter</taxon>
    </lineage>
</organism>